<comment type="function">
    <text evidence="1">Catalyzes the ferrous insertion into protoporphyrin IX.</text>
</comment>
<comment type="catalytic activity">
    <reaction evidence="1">
        <text>heme b + 2 H(+) = protoporphyrin IX + Fe(2+)</text>
        <dbReference type="Rhea" id="RHEA:22584"/>
        <dbReference type="ChEBI" id="CHEBI:15378"/>
        <dbReference type="ChEBI" id="CHEBI:29033"/>
        <dbReference type="ChEBI" id="CHEBI:57306"/>
        <dbReference type="ChEBI" id="CHEBI:60344"/>
        <dbReference type="EC" id="4.98.1.1"/>
    </reaction>
</comment>
<comment type="pathway">
    <text evidence="1">Porphyrin-containing compound metabolism; protoheme biosynthesis; protoheme from protoporphyrin-IX: step 1/1.</text>
</comment>
<comment type="subcellular location">
    <subcellularLocation>
        <location evidence="1">Cytoplasm</location>
    </subcellularLocation>
</comment>
<comment type="similarity">
    <text evidence="1">Belongs to the ferrochelatase family.</text>
</comment>
<keyword id="KW-0963">Cytoplasm</keyword>
<keyword id="KW-0350">Heme biosynthesis</keyword>
<keyword id="KW-0408">Iron</keyword>
<keyword id="KW-0456">Lyase</keyword>
<keyword id="KW-0479">Metal-binding</keyword>
<keyword id="KW-0627">Porphyrin biosynthesis</keyword>
<keyword id="KW-1185">Reference proteome</keyword>
<evidence type="ECO:0000255" key="1">
    <source>
        <dbReference type="HAMAP-Rule" id="MF_00323"/>
    </source>
</evidence>
<reference key="1">
    <citation type="journal article" date="2007" name="PLoS Genet.">
        <title>Patterns and implications of gene gain and loss in the evolution of Prochlorococcus.</title>
        <authorList>
            <person name="Kettler G.C."/>
            <person name="Martiny A.C."/>
            <person name="Huang K."/>
            <person name="Zucker J."/>
            <person name="Coleman M.L."/>
            <person name="Rodrigue S."/>
            <person name="Chen F."/>
            <person name="Lapidus A."/>
            <person name="Ferriera S."/>
            <person name="Johnson J."/>
            <person name="Steglich C."/>
            <person name="Church G.M."/>
            <person name="Richardson P."/>
            <person name="Chisholm S.W."/>
        </authorList>
    </citation>
    <scope>NUCLEOTIDE SEQUENCE [LARGE SCALE GENOMIC DNA]</scope>
    <source>
        <strain>MIT 9301</strain>
    </source>
</reference>
<sequence>MVKIGVLLMNLGGPERITDVGPFLYNLFSDPEIIRTPFPVFQKPLAWLISTLRSTTSQQAYLSIGGGSPIRRITEQQARELQSKLREKGFNATTYIAMRYWHPFTESAIADMKADGIDQVVVIPLYPHFSISTSGSSFRELKKLRDSDDEFKKVPMRCVRSWFSQSGYLKSMVELISEQISLCESPSKAHIFFTAHGVPKSYVEEAGDPYKQQIEDCSLLIINELEKCLGYSNPHTLSYQSRVGPVEWLKPYTEEVLADLGRSNVNDLVVVPISFVGEHIETLQEIDIEYKEIAEKAGIKNFRRVKALNTHPTFIEGLSDLVISCLEGPLVNIEEASQLPEKVKLYPQEKWQWGWNNSSEVWNGRVAMIIFLVLFIELISGSGPLHKLGIL</sequence>
<gene>
    <name evidence="1" type="primary">hemH</name>
    <name type="ordered locus">P9301_05511</name>
</gene>
<accession>A3PBP9</accession>
<organism>
    <name type="scientific">Prochlorococcus marinus (strain MIT 9301)</name>
    <dbReference type="NCBI Taxonomy" id="167546"/>
    <lineage>
        <taxon>Bacteria</taxon>
        <taxon>Bacillati</taxon>
        <taxon>Cyanobacteriota</taxon>
        <taxon>Cyanophyceae</taxon>
        <taxon>Synechococcales</taxon>
        <taxon>Prochlorococcaceae</taxon>
        <taxon>Prochlorococcus</taxon>
    </lineage>
</organism>
<dbReference type="EC" id="4.98.1.1" evidence="1"/>
<dbReference type="EMBL" id="CP000576">
    <property type="protein sequence ID" value="ABO17174.1"/>
    <property type="molecule type" value="Genomic_DNA"/>
</dbReference>
<dbReference type="RefSeq" id="WP_011862544.1">
    <property type="nucleotide sequence ID" value="NC_009091.1"/>
</dbReference>
<dbReference type="SMR" id="A3PBP9"/>
<dbReference type="STRING" id="167546.P9301_05511"/>
<dbReference type="KEGG" id="pmg:P9301_05511"/>
<dbReference type="eggNOG" id="COG0276">
    <property type="taxonomic scope" value="Bacteria"/>
</dbReference>
<dbReference type="HOGENOM" id="CLU_018884_4_3_3"/>
<dbReference type="OrthoDB" id="9809741at2"/>
<dbReference type="UniPathway" id="UPA00252">
    <property type="reaction ID" value="UER00325"/>
</dbReference>
<dbReference type="Proteomes" id="UP000001430">
    <property type="component" value="Chromosome"/>
</dbReference>
<dbReference type="GO" id="GO:0005737">
    <property type="term" value="C:cytoplasm"/>
    <property type="evidence" value="ECO:0007669"/>
    <property type="project" value="UniProtKB-SubCell"/>
</dbReference>
<dbReference type="GO" id="GO:0004325">
    <property type="term" value="F:ferrochelatase activity"/>
    <property type="evidence" value="ECO:0007669"/>
    <property type="project" value="UniProtKB-UniRule"/>
</dbReference>
<dbReference type="GO" id="GO:0046872">
    <property type="term" value="F:metal ion binding"/>
    <property type="evidence" value="ECO:0007669"/>
    <property type="project" value="UniProtKB-KW"/>
</dbReference>
<dbReference type="GO" id="GO:0006783">
    <property type="term" value="P:heme biosynthetic process"/>
    <property type="evidence" value="ECO:0007669"/>
    <property type="project" value="UniProtKB-UniRule"/>
</dbReference>
<dbReference type="CDD" id="cd00419">
    <property type="entry name" value="Ferrochelatase_C"/>
    <property type="match status" value="1"/>
</dbReference>
<dbReference type="CDD" id="cd03411">
    <property type="entry name" value="Ferrochelatase_N"/>
    <property type="match status" value="1"/>
</dbReference>
<dbReference type="FunFam" id="3.40.50.1400:FF:000006">
    <property type="entry name" value="Ferrochelatase"/>
    <property type="match status" value="1"/>
</dbReference>
<dbReference type="Gene3D" id="3.40.50.1400">
    <property type="match status" value="2"/>
</dbReference>
<dbReference type="HAMAP" id="MF_00323">
    <property type="entry name" value="Ferrochelatase"/>
    <property type="match status" value="1"/>
</dbReference>
<dbReference type="InterPro" id="IPR001015">
    <property type="entry name" value="Ferrochelatase"/>
</dbReference>
<dbReference type="InterPro" id="IPR019772">
    <property type="entry name" value="Ferrochelatase_AS"/>
</dbReference>
<dbReference type="InterPro" id="IPR033644">
    <property type="entry name" value="Ferrochelatase_C"/>
</dbReference>
<dbReference type="InterPro" id="IPR033659">
    <property type="entry name" value="Ferrochelatase_N"/>
</dbReference>
<dbReference type="NCBIfam" id="TIGR00109">
    <property type="entry name" value="hemH"/>
    <property type="match status" value="1"/>
</dbReference>
<dbReference type="PANTHER" id="PTHR11108">
    <property type="entry name" value="FERROCHELATASE"/>
    <property type="match status" value="1"/>
</dbReference>
<dbReference type="PANTHER" id="PTHR11108:SF1">
    <property type="entry name" value="FERROCHELATASE, MITOCHONDRIAL"/>
    <property type="match status" value="1"/>
</dbReference>
<dbReference type="Pfam" id="PF00762">
    <property type="entry name" value="Ferrochelatase"/>
    <property type="match status" value="1"/>
</dbReference>
<dbReference type="SUPFAM" id="SSF53800">
    <property type="entry name" value="Chelatase"/>
    <property type="match status" value="1"/>
</dbReference>
<dbReference type="SUPFAM" id="SSF103511">
    <property type="entry name" value="Chlorophyll a-b binding protein"/>
    <property type="match status" value="1"/>
</dbReference>
<dbReference type="PROSITE" id="PS00534">
    <property type="entry name" value="FERROCHELATASE"/>
    <property type="match status" value="1"/>
</dbReference>
<proteinExistence type="inferred from homology"/>
<protein>
    <recommendedName>
        <fullName evidence="1">Ferrochelatase</fullName>
        <ecNumber evidence="1">4.98.1.1</ecNumber>
    </recommendedName>
    <alternativeName>
        <fullName evidence="1">Heme synthase</fullName>
    </alternativeName>
    <alternativeName>
        <fullName evidence="1">Protoheme ferro-lyase</fullName>
    </alternativeName>
</protein>
<feature type="chain" id="PRO_1000019335" description="Ferrochelatase">
    <location>
        <begin position="1"/>
        <end position="391"/>
    </location>
</feature>
<feature type="binding site" evidence="1">
    <location>
        <position position="196"/>
    </location>
    <ligand>
        <name>Fe cation</name>
        <dbReference type="ChEBI" id="CHEBI:24875"/>
    </ligand>
</feature>
<feature type="binding site" evidence="1">
    <location>
        <position position="281"/>
    </location>
    <ligand>
        <name>Fe cation</name>
        <dbReference type="ChEBI" id="CHEBI:24875"/>
    </ligand>
</feature>
<name>HEMH_PROM0</name>